<organism>
    <name type="scientific">Bos taurus</name>
    <name type="common">Bovine</name>
    <dbReference type="NCBI Taxonomy" id="9913"/>
    <lineage>
        <taxon>Eukaryota</taxon>
        <taxon>Metazoa</taxon>
        <taxon>Chordata</taxon>
        <taxon>Craniata</taxon>
        <taxon>Vertebrata</taxon>
        <taxon>Euteleostomi</taxon>
        <taxon>Mammalia</taxon>
        <taxon>Eutheria</taxon>
        <taxon>Laurasiatheria</taxon>
        <taxon>Artiodactyla</taxon>
        <taxon>Ruminantia</taxon>
        <taxon>Pecora</taxon>
        <taxon>Bovidae</taxon>
        <taxon>Bovinae</taxon>
        <taxon>Bos</taxon>
    </lineage>
</organism>
<dbReference type="EMBL" id="BC122616">
    <property type="protein sequence ID" value="AAI22617.1"/>
    <property type="molecule type" value="mRNA"/>
</dbReference>
<dbReference type="PIR" id="S65365">
    <property type="entry name" value="S65365"/>
</dbReference>
<dbReference type="RefSeq" id="NP_001121669.1">
    <property type="nucleotide sequence ID" value="NM_001128197.1"/>
</dbReference>
<dbReference type="BMRB" id="Q09430"/>
<dbReference type="SMR" id="Q09430"/>
<dbReference type="FunCoup" id="Q09430">
    <property type="interactions" value="1344"/>
</dbReference>
<dbReference type="STRING" id="9913.ENSBTAP00000014805"/>
<dbReference type="PaxDb" id="9913-ENSBTAP00000014805"/>
<dbReference type="GeneID" id="539034"/>
<dbReference type="KEGG" id="bta:539034"/>
<dbReference type="CTD" id="5217"/>
<dbReference type="VEuPathDB" id="HostDB:ENSBTAG00000011150"/>
<dbReference type="eggNOG" id="KOG1755">
    <property type="taxonomic scope" value="Eukaryota"/>
</dbReference>
<dbReference type="HOGENOM" id="CLU_123405_1_0_1"/>
<dbReference type="InParanoid" id="Q09430"/>
<dbReference type="OMA" id="NKKAHSM"/>
<dbReference type="OrthoDB" id="421374at2759"/>
<dbReference type="TreeFam" id="TF331744"/>
<dbReference type="Reactome" id="R-BTA-5663220">
    <property type="pathway name" value="RHO GTPases Activate Formins"/>
</dbReference>
<dbReference type="Proteomes" id="UP000009136">
    <property type="component" value="Chromosome 1"/>
</dbReference>
<dbReference type="Bgee" id="ENSBTAG00000011150">
    <property type="expression patterns" value="Expressed in occipital lobe and 104 other cell types or tissues"/>
</dbReference>
<dbReference type="GO" id="GO:0005737">
    <property type="term" value="C:cytoplasm"/>
    <property type="evidence" value="ECO:0000318"/>
    <property type="project" value="GO_Central"/>
</dbReference>
<dbReference type="GO" id="GO:0005856">
    <property type="term" value="C:cytoskeleton"/>
    <property type="evidence" value="ECO:0007669"/>
    <property type="project" value="UniProtKB-SubCell"/>
</dbReference>
<dbReference type="GO" id="GO:0003779">
    <property type="term" value="F:actin binding"/>
    <property type="evidence" value="ECO:0000318"/>
    <property type="project" value="GO_Central"/>
</dbReference>
<dbReference type="GO" id="GO:0030036">
    <property type="term" value="P:actin cytoskeleton organization"/>
    <property type="evidence" value="ECO:0007669"/>
    <property type="project" value="InterPro"/>
</dbReference>
<dbReference type="GO" id="GO:0032233">
    <property type="term" value="P:positive regulation of actin filament bundle assembly"/>
    <property type="evidence" value="ECO:0000318"/>
    <property type="project" value="GO_Central"/>
</dbReference>
<dbReference type="GO" id="GO:0030833">
    <property type="term" value="P:regulation of actin filament polymerization"/>
    <property type="evidence" value="ECO:0000318"/>
    <property type="project" value="GO_Central"/>
</dbReference>
<dbReference type="CDD" id="cd00148">
    <property type="entry name" value="PROF"/>
    <property type="match status" value="1"/>
</dbReference>
<dbReference type="FunFam" id="3.30.450.30:FF:000006">
    <property type="entry name" value="Profilin"/>
    <property type="match status" value="1"/>
</dbReference>
<dbReference type="Gene3D" id="3.30.450.30">
    <property type="entry name" value="Dynein light chain 2a, cytoplasmic"/>
    <property type="match status" value="1"/>
</dbReference>
<dbReference type="InterPro" id="IPR048278">
    <property type="entry name" value="PFN"/>
</dbReference>
<dbReference type="InterPro" id="IPR005455">
    <property type="entry name" value="PFN_euk"/>
</dbReference>
<dbReference type="InterPro" id="IPR036140">
    <property type="entry name" value="PFN_sf"/>
</dbReference>
<dbReference type="InterPro" id="IPR005454">
    <property type="entry name" value="Profilin1/2/3_vertebrate"/>
</dbReference>
<dbReference type="InterPro" id="IPR027310">
    <property type="entry name" value="Profilin_CS"/>
</dbReference>
<dbReference type="PANTHER" id="PTHR13936">
    <property type="entry name" value="PROFILIN"/>
    <property type="match status" value="1"/>
</dbReference>
<dbReference type="PANTHER" id="PTHR13936:SF15">
    <property type="entry name" value="PROFILIN-2"/>
    <property type="match status" value="1"/>
</dbReference>
<dbReference type="Pfam" id="PF00235">
    <property type="entry name" value="Profilin"/>
    <property type="match status" value="1"/>
</dbReference>
<dbReference type="PRINTS" id="PR00392">
    <property type="entry name" value="PROFILIN"/>
</dbReference>
<dbReference type="PRINTS" id="PR01639">
    <property type="entry name" value="PROFILINMAML"/>
</dbReference>
<dbReference type="SMART" id="SM00392">
    <property type="entry name" value="PROF"/>
    <property type="match status" value="1"/>
</dbReference>
<dbReference type="SUPFAM" id="SSF55770">
    <property type="entry name" value="Profilin (actin-binding protein)"/>
    <property type="match status" value="1"/>
</dbReference>
<dbReference type="PROSITE" id="PS00414">
    <property type="entry name" value="PROFILIN"/>
    <property type="match status" value="1"/>
</dbReference>
<gene>
    <name type="primary">PFN2</name>
</gene>
<proteinExistence type="evidence at protein level"/>
<reference key="1">
    <citation type="submission" date="2006-08" db="EMBL/GenBank/DDBJ databases">
        <authorList>
            <consortium name="NIH - Mammalian Gene Collection (MGC) project"/>
        </authorList>
    </citation>
    <scope>NUCLEOTIDE SEQUENCE [LARGE SCALE MRNA]</scope>
    <source>
        <strain>Hereford</strain>
        <tissue>Fetal skin</tissue>
    </source>
</reference>
<reference key="2">
    <citation type="journal article" date="1995" name="Eur. J. Biochem.">
        <title>Purification and characterization of bovine profilin II. Actin, poly(L-proline) and inositolphospholipid binding.</title>
        <authorList>
            <person name="Lambrechts A."/>
            <person name="van Damme J."/>
            <person name="Goethals M."/>
            <person name="Vandekerckhove J."/>
            <person name="Ampe C."/>
        </authorList>
    </citation>
    <scope>PROTEIN SEQUENCE OF 30-140</scope>
    <source>
        <tissue>Brain</tissue>
    </source>
</reference>
<protein>
    <recommendedName>
        <fullName>Profilin-2</fullName>
    </recommendedName>
    <alternativeName>
        <fullName>Profilin II</fullName>
    </alternativeName>
</protein>
<sequence>MAGWQSYVDNLMCDGCCQEAAIVGYCDAKYVWAATAGGVFQSITPVEIDMIVGKDREGFFTNGLTLGAKKCSVIRDSLYVDGDCTMDIRTKSQGGEPTYNVAVGRAGRVLVFVMGKEGVHGGGLNKKAYSMAKYLRDSGF</sequence>
<name>PROF2_BOVIN</name>
<comment type="function">
    <text>Binds to actin and affects the structure of the cytoskeleton. At high concentrations, profilin prevents the polymerization of actin, whereas it enhances it at low concentrations. By binding to PIP2, it inhibits the formation of IP3 and DG.</text>
</comment>
<comment type="subunit">
    <text evidence="1 2">Occurs in many kinds of cells as a complex with monomeric actin in a 1:1 ratio (By similarity). Interacts with PFN2 (By similarity). Interacts with ACTMAP (via N-terminus); the interaction may facilitate efficient cleavage of the acetylated N-terminus of immature actin by ACTMAP (By similarity).</text>
</comment>
<comment type="subcellular location">
    <subcellularLocation>
        <location>Cytoplasm</location>
        <location>Cytoskeleton</location>
    </subcellularLocation>
</comment>
<comment type="similarity">
    <text evidence="3">Belongs to the profilin family.</text>
</comment>
<feature type="initiator methionine" description="Removed" evidence="1">
    <location>
        <position position="1"/>
    </location>
</feature>
<feature type="chain" id="PRO_0000199574" description="Profilin-2">
    <location>
        <begin position="2"/>
        <end position="140"/>
    </location>
</feature>
<feature type="modified residue" description="N-acetylalanine" evidence="1">
    <location>
        <position position="2"/>
    </location>
</feature>
<accession>Q09430</accession>
<accession>A4FUW7</accession>
<evidence type="ECO:0000250" key="1">
    <source>
        <dbReference type="UniProtKB" id="P35080"/>
    </source>
</evidence>
<evidence type="ECO:0000250" key="2">
    <source>
        <dbReference type="UniProtKB" id="Q9JJV2"/>
    </source>
</evidence>
<evidence type="ECO:0000305" key="3"/>
<keyword id="KW-0007">Acetylation</keyword>
<keyword id="KW-0009">Actin-binding</keyword>
<keyword id="KW-0963">Cytoplasm</keyword>
<keyword id="KW-0206">Cytoskeleton</keyword>
<keyword id="KW-0903">Direct protein sequencing</keyword>
<keyword id="KW-1185">Reference proteome</keyword>